<proteinExistence type="inferred from homology"/>
<name>EFG_RHIJ3</name>
<organism>
    <name type="scientific">Rhizobium johnstonii (strain DSM 114642 / LMG 32736 / 3841)</name>
    <name type="common">Rhizobium leguminosarum bv. viciae</name>
    <dbReference type="NCBI Taxonomy" id="216596"/>
    <lineage>
        <taxon>Bacteria</taxon>
        <taxon>Pseudomonadati</taxon>
        <taxon>Pseudomonadota</taxon>
        <taxon>Alphaproteobacteria</taxon>
        <taxon>Hyphomicrobiales</taxon>
        <taxon>Rhizobiaceae</taxon>
        <taxon>Rhizobium/Agrobacterium group</taxon>
        <taxon>Rhizobium</taxon>
        <taxon>Rhizobium johnstonii</taxon>
    </lineage>
</organism>
<evidence type="ECO:0000255" key="1">
    <source>
        <dbReference type="HAMAP-Rule" id="MF_00054"/>
    </source>
</evidence>
<accession>Q1MIE4</accession>
<comment type="function">
    <text evidence="1">Catalyzes the GTP-dependent ribosomal translocation step during translation elongation. During this step, the ribosome changes from the pre-translocational (PRE) to the post-translocational (POST) state as the newly formed A-site-bound peptidyl-tRNA and P-site-bound deacylated tRNA move to the P and E sites, respectively. Catalyzes the coordinated movement of the two tRNA molecules, the mRNA and conformational changes in the ribosome.</text>
</comment>
<comment type="subcellular location">
    <subcellularLocation>
        <location evidence="1">Cytoplasm</location>
    </subcellularLocation>
</comment>
<comment type="similarity">
    <text evidence="1">Belongs to the TRAFAC class translation factor GTPase superfamily. Classic translation factor GTPase family. EF-G/EF-2 subfamily.</text>
</comment>
<reference key="1">
    <citation type="journal article" date="2006" name="Genome Biol.">
        <title>The genome of Rhizobium leguminosarum has recognizable core and accessory components.</title>
        <authorList>
            <person name="Young J.P.W."/>
            <person name="Crossman L.C."/>
            <person name="Johnston A.W.B."/>
            <person name="Thomson N.R."/>
            <person name="Ghazoui Z.F."/>
            <person name="Hull K.H."/>
            <person name="Wexler M."/>
            <person name="Curson A.R.J."/>
            <person name="Todd J.D."/>
            <person name="Poole P.S."/>
            <person name="Mauchline T.H."/>
            <person name="East A.K."/>
            <person name="Quail M.A."/>
            <person name="Churcher C."/>
            <person name="Arrowsmith C."/>
            <person name="Cherevach I."/>
            <person name="Chillingworth T."/>
            <person name="Clarke K."/>
            <person name="Cronin A."/>
            <person name="Davis P."/>
            <person name="Fraser A."/>
            <person name="Hance Z."/>
            <person name="Hauser H."/>
            <person name="Jagels K."/>
            <person name="Moule S."/>
            <person name="Mungall K."/>
            <person name="Norbertczak H."/>
            <person name="Rabbinowitsch E."/>
            <person name="Sanders M."/>
            <person name="Simmonds M."/>
            <person name="Whitehead S."/>
            <person name="Parkhill J."/>
        </authorList>
    </citation>
    <scope>NUCLEOTIDE SEQUENCE [LARGE SCALE GENOMIC DNA]</scope>
    <source>
        <strain>DSM 114642 / LMG 32736 / 3841</strain>
    </source>
</reference>
<gene>
    <name evidence="1" type="primary">fusA</name>
    <name type="ordered locus">RL1771</name>
</gene>
<dbReference type="EMBL" id="AM236080">
    <property type="protein sequence ID" value="CAK07266.1"/>
    <property type="molecule type" value="Genomic_DNA"/>
</dbReference>
<dbReference type="RefSeq" id="WP_011651423.1">
    <property type="nucleotide sequence ID" value="NC_008380.1"/>
</dbReference>
<dbReference type="SMR" id="Q1MIE4"/>
<dbReference type="EnsemblBacteria" id="CAK07266">
    <property type="protein sequence ID" value="CAK07266"/>
    <property type="gene ID" value="RL1771"/>
</dbReference>
<dbReference type="KEGG" id="rle:RL1771"/>
<dbReference type="eggNOG" id="COG0480">
    <property type="taxonomic scope" value="Bacteria"/>
</dbReference>
<dbReference type="HOGENOM" id="CLU_002794_4_1_5"/>
<dbReference type="Proteomes" id="UP000006575">
    <property type="component" value="Chromosome"/>
</dbReference>
<dbReference type="GO" id="GO:0005737">
    <property type="term" value="C:cytoplasm"/>
    <property type="evidence" value="ECO:0007669"/>
    <property type="project" value="UniProtKB-SubCell"/>
</dbReference>
<dbReference type="GO" id="GO:0005525">
    <property type="term" value="F:GTP binding"/>
    <property type="evidence" value="ECO:0007669"/>
    <property type="project" value="UniProtKB-UniRule"/>
</dbReference>
<dbReference type="GO" id="GO:0003924">
    <property type="term" value="F:GTPase activity"/>
    <property type="evidence" value="ECO:0007669"/>
    <property type="project" value="InterPro"/>
</dbReference>
<dbReference type="GO" id="GO:0003746">
    <property type="term" value="F:translation elongation factor activity"/>
    <property type="evidence" value="ECO:0007669"/>
    <property type="project" value="UniProtKB-UniRule"/>
</dbReference>
<dbReference type="GO" id="GO:0032790">
    <property type="term" value="P:ribosome disassembly"/>
    <property type="evidence" value="ECO:0007669"/>
    <property type="project" value="TreeGrafter"/>
</dbReference>
<dbReference type="CDD" id="cd01886">
    <property type="entry name" value="EF-G"/>
    <property type="match status" value="1"/>
</dbReference>
<dbReference type="CDD" id="cd16262">
    <property type="entry name" value="EFG_III"/>
    <property type="match status" value="1"/>
</dbReference>
<dbReference type="CDD" id="cd01434">
    <property type="entry name" value="EFG_mtEFG1_IV"/>
    <property type="match status" value="1"/>
</dbReference>
<dbReference type="CDD" id="cd03713">
    <property type="entry name" value="EFG_mtEFG_C"/>
    <property type="match status" value="1"/>
</dbReference>
<dbReference type="CDD" id="cd04088">
    <property type="entry name" value="EFG_mtEFG_II"/>
    <property type="match status" value="1"/>
</dbReference>
<dbReference type="FunFam" id="2.40.30.10:FF:000006">
    <property type="entry name" value="Elongation factor G"/>
    <property type="match status" value="1"/>
</dbReference>
<dbReference type="FunFam" id="3.30.230.10:FF:000003">
    <property type="entry name" value="Elongation factor G"/>
    <property type="match status" value="1"/>
</dbReference>
<dbReference type="FunFam" id="3.30.70.240:FF:000001">
    <property type="entry name" value="Elongation factor G"/>
    <property type="match status" value="1"/>
</dbReference>
<dbReference type="FunFam" id="3.30.70.870:FF:000001">
    <property type="entry name" value="Elongation factor G"/>
    <property type="match status" value="1"/>
</dbReference>
<dbReference type="FunFam" id="3.40.50.300:FF:000029">
    <property type="entry name" value="Elongation factor G"/>
    <property type="match status" value="1"/>
</dbReference>
<dbReference type="Gene3D" id="3.30.230.10">
    <property type="match status" value="1"/>
</dbReference>
<dbReference type="Gene3D" id="3.30.70.240">
    <property type="match status" value="1"/>
</dbReference>
<dbReference type="Gene3D" id="3.30.70.870">
    <property type="entry name" value="Elongation Factor G (Translational Gtpase), domain 3"/>
    <property type="match status" value="1"/>
</dbReference>
<dbReference type="Gene3D" id="3.40.50.300">
    <property type="entry name" value="P-loop containing nucleotide triphosphate hydrolases"/>
    <property type="match status" value="1"/>
</dbReference>
<dbReference type="Gene3D" id="2.40.30.10">
    <property type="entry name" value="Translation factors"/>
    <property type="match status" value="1"/>
</dbReference>
<dbReference type="HAMAP" id="MF_00054_B">
    <property type="entry name" value="EF_G_EF_2_B"/>
    <property type="match status" value="1"/>
</dbReference>
<dbReference type="InterPro" id="IPR053905">
    <property type="entry name" value="EF-G-like_DII"/>
</dbReference>
<dbReference type="InterPro" id="IPR041095">
    <property type="entry name" value="EFG_II"/>
</dbReference>
<dbReference type="InterPro" id="IPR009022">
    <property type="entry name" value="EFG_III"/>
</dbReference>
<dbReference type="InterPro" id="IPR035647">
    <property type="entry name" value="EFG_III/V"/>
</dbReference>
<dbReference type="InterPro" id="IPR047872">
    <property type="entry name" value="EFG_IV"/>
</dbReference>
<dbReference type="InterPro" id="IPR035649">
    <property type="entry name" value="EFG_V"/>
</dbReference>
<dbReference type="InterPro" id="IPR000640">
    <property type="entry name" value="EFG_V-like"/>
</dbReference>
<dbReference type="InterPro" id="IPR031157">
    <property type="entry name" value="G_TR_CS"/>
</dbReference>
<dbReference type="InterPro" id="IPR027417">
    <property type="entry name" value="P-loop_NTPase"/>
</dbReference>
<dbReference type="InterPro" id="IPR020568">
    <property type="entry name" value="Ribosomal_Su5_D2-typ_SF"/>
</dbReference>
<dbReference type="InterPro" id="IPR014721">
    <property type="entry name" value="Ribsml_uS5_D2-typ_fold_subgr"/>
</dbReference>
<dbReference type="InterPro" id="IPR005225">
    <property type="entry name" value="Small_GTP-bd"/>
</dbReference>
<dbReference type="InterPro" id="IPR000795">
    <property type="entry name" value="T_Tr_GTP-bd_dom"/>
</dbReference>
<dbReference type="InterPro" id="IPR009000">
    <property type="entry name" value="Transl_B-barrel_sf"/>
</dbReference>
<dbReference type="InterPro" id="IPR004540">
    <property type="entry name" value="Transl_elong_EFG/EF2"/>
</dbReference>
<dbReference type="InterPro" id="IPR005517">
    <property type="entry name" value="Transl_elong_EFG/EF2_IV"/>
</dbReference>
<dbReference type="NCBIfam" id="TIGR00484">
    <property type="entry name" value="EF-G"/>
    <property type="match status" value="1"/>
</dbReference>
<dbReference type="NCBIfam" id="NF009381">
    <property type="entry name" value="PRK12740.1-5"/>
    <property type="match status" value="1"/>
</dbReference>
<dbReference type="NCBIfam" id="TIGR00231">
    <property type="entry name" value="small_GTP"/>
    <property type="match status" value="1"/>
</dbReference>
<dbReference type="PANTHER" id="PTHR43261:SF1">
    <property type="entry name" value="RIBOSOME-RELEASING FACTOR 2, MITOCHONDRIAL"/>
    <property type="match status" value="1"/>
</dbReference>
<dbReference type="PANTHER" id="PTHR43261">
    <property type="entry name" value="TRANSLATION ELONGATION FACTOR G-RELATED"/>
    <property type="match status" value="1"/>
</dbReference>
<dbReference type="Pfam" id="PF22042">
    <property type="entry name" value="EF-G_D2"/>
    <property type="match status" value="1"/>
</dbReference>
<dbReference type="Pfam" id="PF00679">
    <property type="entry name" value="EFG_C"/>
    <property type="match status" value="1"/>
</dbReference>
<dbReference type="Pfam" id="PF14492">
    <property type="entry name" value="EFG_III"/>
    <property type="match status" value="1"/>
</dbReference>
<dbReference type="Pfam" id="PF03764">
    <property type="entry name" value="EFG_IV"/>
    <property type="match status" value="1"/>
</dbReference>
<dbReference type="Pfam" id="PF00009">
    <property type="entry name" value="GTP_EFTU"/>
    <property type="match status" value="1"/>
</dbReference>
<dbReference type="PRINTS" id="PR00315">
    <property type="entry name" value="ELONGATNFCT"/>
</dbReference>
<dbReference type="SMART" id="SM00838">
    <property type="entry name" value="EFG_C"/>
    <property type="match status" value="1"/>
</dbReference>
<dbReference type="SMART" id="SM00889">
    <property type="entry name" value="EFG_IV"/>
    <property type="match status" value="1"/>
</dbReference>
<dbReference type="SUPFAM" id="SSF54980">
    <property type="entry name" value="EF-G C-terminal domain-like"/>
    <property type="match status" value="2"/>
</dbReference>
<dbReference type="SUPFAM" id="SSF52540">
    <property type="entry name" value="P-loop containing nucleoside triphosphate hydrolases"/>
    <property type="match status" value="1"/>
</dbReference>
<dbReference type="SUPFAM" id="SSF54211">
    <property type="entry name" value="Ribosomal protein S5 domain 2-like"/>
    <property type="match status" value="1"/>
</dbReference>
<dbReference type="SUPFAM" id="SSF50447">
    <property type="entry name" value="Translation proteins"/>
    <property type="match status" value="1"/>
</dbReference>
<dbReference type="PROSITE" id="PS00301">
    <property type="entry name" value="G_TR_1"/>
    <property type="match status" value="1"/>
</dbReference>
<dbReference type="PROSITE" id="PS51722">
    <property type="entry name" value="G_TR_2"/>
    <property type="match status" value="1"/>
</dbReference>
<feature type="chain" id="PRO_0000263490" description="Elongation factor G">
    <location>
        <begin position="1"/>
        <end position="699"/>
    </location>
</feature>
<feature type="domain" description="tr-type G">
    <location>
        <begin position="8"/>
        <end position="288"/>
    </location>
</feature>
<feature type="binding site" evidence="1">
    <location>
        <begin position="17"/>
        <end position="24"/>
    </location>
    <ligand>
        <name>GTP</name>
        <dbReference type="ChEBI" id="CHEBI:37565"/>
    </ligand>
</feature>
<feature type="binding site" evidence="1">
    <location>
        <begin position="86"/>
        <end position="90"/>
    </location>
    <ligand>
        <name>GTP</name>
        <dbReference type="ChEBI" id="CHEBI:37565"/>
    </ligand>
</feature>
<feature type="binding site" evidence="1">
    <location>
        <begin position="140"/>
        <end position="143"/>
    </location>
    <ligand>
        <name>GTP</name>
        <dbReference type="ChEBI" id="CHEBI:37565"/>
    </ligand>
</feature>
<keyword id="KW-0963">Cytoplasm</keyword>
<keyword id="KW-0251">Elongation factor</keyword>
<keyword id="KW-0342">GTP-binding</keyword>
<keyword id="KW-0547">Nucleotide-binding</keyword>
<keyword id="KW-0648">Protein biosynthesis</keyword>
<protein>
    <recommendedName>
        <fullName evidence="1">Elongation factor G</fullName>
        <shortName evidence="1">EF-G</shortName>
    </recommendedName>
</protein>
<sequence>MAREYKIEDYRNFGIMAHIDAGKTTTTERILYYTGKSHKIGEVHDGAATMDWMEQEQERGITITSAATTTFWKGRDGKMRRFNIIDTPGHVDFTIEVERSLRVLDGAIALLDANAGVEPQTETVWRQAEKYNVPRMIFCNKMDKTGADFYRSVEMIKTRLGATAVVMQLPIGAETEFKGVIDLVEMNALIWRDESLGAQWDVVEIPEDMKAKAEEYREKLIETVVDIDEAATEAYLEGILPDNEQIRALVRRGTIDVKFHPMFCGTAFKNKGVQPLLDAVVDYLPSPMDIPAIKGIDFKTEAEIERHADDSEPLSMLAFKIMNDPFVGSLTFARIYSGKLEKGASVINTVKDKRERVGRMLQMHSNSREDIEEAFAGDIVALAGLKETTTGDTLCDPLKPVILERMEFPEPVIQIAIEPKTKGDQEKMGLALNRLAAEDPSFRVKTDQESGQTIIAGMGELHLDIIVDRMRREFKVEATVGAPQVAYRETITRTHEEDYTHKKQSGGTGQFARVKIVFEPNPEGDEFKFESKIVGGSVPKEYIPGVQKGIESVLSSGPLAGFPMLGVKATLIDGAFHDVDSSVLAFEIASRACFREAAKKAGAQLLEPMMKVEVVTPEDYVGDVIGDLNSRRGQIQGQESRGIAVVINANVPLANMFKYVDNLRSMSQGRAQYTMTFDHYSPVPSNVATEIQAKYSGQK</sequence>